<evidence type="ECO:0000255" key="1">
    <source>
        <dbReference type="HAMAP-Rule" id="MF_01160"/>
    </source>
</evidence>
<sequence>MLDVKSQDISIPEAVVVLCTAPDEATAQDLAAKVLAEKLAACATLLPGATSLYYWEGKLEQEYEVQMILKTTVSHQQALIDCLKSHHPYQTPELLVLPVTHGDTDYLSWLNASLR</sequence>
<proteinExistence type="inferred from homology"/>
<gene>
    <name evidence="1" type="primary">cutA</name>
    <name type="ordered locus">SCH_4202</name>
</gene>
<keyword id="KW-0186">Copper</keyword>
<keyword id="KW-0963">Cytoplasm</keyword>
<keyword id="KW-0479">Metal-binding</keyword>
<dbReference type="EMBL" id="AE017220">
    <property type="protein sequence ID" value="AAX68108.1"/>
    <property type="molecule type" value="Genomic_DNA"/>
</dbReference>
<dbReference type="RefSeq" id="WP_000887832.1">
    <property type="nucleotide sequence ID" value="NC_006905.1"/>
</dbReference>
<dbReference type="SMR" id="Q57GQ4"/>
<dbReference type="GeneID" id="66758552"/>
<dbReference type="KEGG" id="sec:SCH_4202"/>
<dbReference type="HOGENOM" id="CLU_098807_3_0_6"/>
<dbReference type="Proteomes" id="UP000000538">
    <property type="component" value="Chromosome"/>
</dbReference>
<dbReference type="GO" id="GO:0005737">
    <property type="term" value="C:cytoplasm"/>
    <property type="evidence" value="ECO:0007669"/>
    <property type="project" value="UniProtKB-SubCell"/>
</dbReference>
<dbReference type="GO" id="GO:0005507">
    <property type="term" value="F:copper ion binding"/>
    <property type="evidence" value="ECO:0007669"/>
    <property type="project" value="UniProtKB-UniRule"/>
</dbReference>
<dbReference type="GO" id="GO:0010038">
    <property type="term" value="P:response to metal ion"/>
    <property type="evidence" value="ECO:0007669"/>
    <property type="project" value="InterPro"/>
</dbReference>
<dbReference type="FunFam" id="3.30.70.120:FF:000004">
    <property type="entry name" value="Divalent-cation tolerance protein CutA"/>
    <property type="match status" value="1"/>
</dbReference>
<dbReference type="Gene3D" id="3.30.70.120">
    <property type="match status" value="1"/>
</dbReference>
<dbReference type="HAMAP" id="MF_01160">
    <property type="entry name" value="CutA"/>
    <property type="match status" value="1"/>
</dbReference>
<dbReference type="InterPro" id="IPR023700">
    <property type="entry name" value="CutA_Enterobact"/>
</dbReference>
<dbReference type="InterPro" id="IPR004323">
    <property type="entry name" value="Ion_tolerance_CutA"/>
</dbReference>
<dbReference type="InterPro" id="IPR011322">
    <property type="entry name" value="N-reg_PII-like_a/b"/>
</dbReference>
<dbReference type="InterPro" id="IPR015867">
    <property type="entry name" value="N-reg_PII/ATP_PRibTrfase_C"/>
</dbReference>
<dbReference type="NCBIfam" id="NF007930">
    <property type="entry name" value="PRK10645.1"/>
    <property type="match status" value="1"/>
</dbReference>
<dbReference type="PANTHER" id="PTHR23419">
    <property type="entry name" value="DIVALENT CATION TOLERANCE CUTA-RELATED"/>
    <property type="match status" value="1"/>
</dbReference>
<dbReference type="PANTHER" id="PTHR23419:SF8">
    <property type="entry name" value="FI09726P"/>
    <property type="match status" value="1"/>
</dbReference>
<dbReference type="Pfam" id="PF03091">
    <property type="entry name" value="CutA1"/>
    <property type="match status" value="1"/>
</dbReference>
<dbReference type="SUPFAM" id="SSF54913">
    <property type="entry name" value="GlnB-like"/>
    <property type="match status" value="1"/>
</dbReference>
<organism>
    <name type="scientific">Salmonella choleraesuis (strain SC-B67)</name>
    <dbReference type="NCBI Taxonomy" id="321314"/>
    <lineage>
        <taxon>Bacteria</taxon>
        <taxon>Pseudomonadati</taxon>
        <taxon>Pseudomonadota</taxon>
        <taxon>Gammaproteobacteria</taxon>
        <taxon>Enterobacterales</taxon>
        <taxon>Enterobacteriaceae</taxon>
        <taxon>Salmonella</taxon>
    </lineage>
</organism>
<feature type="chain" id="PRO_0000280485" description="Divalent-cation tolerance protein CutA">
    <location>
        <begin position="1"/>
        <end position="115"/>
    </location>
</feature>
<feature type="binding site" evidence="1">
    <location>
        <position position="19"/>
    </location>
    <ligand>
        <name>Cu cation</name>
        <dbReference type="ChEBI" id="CHEBI:23378"/>
    </ligand>
</feature>
<feature type="binding site" evidence="1">
    <location>
        <position position="86"/>
    </location>
    <ligand>
        <name>Cu cation</name>
        <dbReference type="ChEBI" id="CHEBI:23378"/>
    </ligand>
</feature>
<feature type="binding site" evidence="1">
    <location>
        <position position="87"/>
    </location>
    <ligand>
        <name>Cu cation</name>
        <dbReference type="ChEBI" id="CHEBI:23378"/>
    </ligand>
</feature>
<protein>
    <recommendedName>
        <fullName evidence="1">Divalent-cation tolerance protein CutA</fullName>
    </recommendedName>
</protein>
<comment type="function">
    <text evidence="1">Involved in resistance toward heavy metals.</text>
</comment>
<comment type="cofactor">
    <cofactor evidence="1">
        <name>Cu cation</name>
        <dbReference type="ChEBI" id="CHEBI:23378"/>
    </cofactor>
    <text evidence="1">Binds 1 copper ion per subunit.</text>
</comment>
<comment type="subunit">
    <text evidence="1">Homotrimer.</text>
</comment>
<comment type="subcellular location">
    <subcellularLocation>
        <location evidence="1">Cytoplasm</location>
    </subcellularLocation>
</comment>
<comment type="similarity">
    <text evidence="1">Belongs to the CutA family.</text>
</comment>
<accession>Q57GQ4</accession>
<name>CUTA_SALCH</name>
<reference key="1">
    <citation type="journal article" date="2005" name="Nucleic Acids Res.">
        <title>The genome sequence of Salmonella enterica serovar Choleraesuis, a highly invasive and resistant zoonotic pathogen.</title>
        <authorList>
            <person name="Chiu C.-H."/>
            <person name="Tang P."/>
            <person name="Chu C."/>
            <person name="Hu S."/>
            <person name="Bao Q."/>
            <person name="Yu J."/>
            <person name="Chou Y.-Y."/>
            <person name="Wang H.-S."/>
            <person name="Lee Y.-S."/>
        </authorList>
    </citation>
    <scope>NUCLEOTIDE SEQUENCE [LARGE SCALE GENOMIC DNA]</scope>
    <source>
        <strain>SC-B67</strain>
    </source>
</reference>